<keyword id="KW-0687">Ribonucleoprotein</keyword>
<keyword id="KW-0689">Ribosomal protein</keyword>
<dbReference type="EMBL" id="CP000628">
    <property type="protein sequence ID" value="ACM26287.1"/>
    <property type="molecule type" value="Genomic_DNA"/>
</dbReference>
<dbReference type="RefSeq" id="WP_007690763.1">
    <property type="nucleotide sequence ID" value="NC_011985.1"/>
</dbReference>
<dbReference type="SMR" id="B9JDT6"/>
<dbReference type="STRING" id="311403.Arad_1982"/>
<dbReference type="GeneID" id="86848175"/>
<dbReference type="KEGG" id="ara:Arad_1982"/>
<dbReference type="eggNOG" id="COG0255">
    <property type="taxonomic scope" value="Bacteria"/>
</dbReference>
<dbReference type="HOGENOM" id="CLU_158491_1_0_5"/>
<dbReference type="Proteomes" id="UP000001600">
    <property type="component" value="Chromosome 1"/>
</dbReference>
<dbReference type="GO" id="GO:0022625">
    <property type="term" value="C:cytosolic large ribosomal subunit"/>
    <property type="evidence" value="ECO:0007669"/>
    <property type="project" value="TreeGrafter"/>
</dbReference>
<dbReference type="GO" id="GO:0003735">
    <property type="term" value="F:structural constituent of ribosome"/>
    <property type="evidence" value="ECO:0007669"/>
    <property type="project" value="InterPro"/>
</dbReference>
<dbReference type="GO" id="GO:0006412">
    <property type="term" value="P:translation"/>
    <property type="evidence" value="ECO:0007669"/>
    <property type="project" value="UniProtKB-UniRule"/>
</dbReference>
<dbReference type="CDD" id="cd00427">
    <property type="entry name" value="Ribosomal_L29_HIP"/>
    <property type="match status" value="1"/>
</dbReference>
<dbReference type="FunFam" id="1.10.287.310:FF:000001">
    <property type="entry name" value="50S ribosomal protein L29"/>
    <property type="match status" value="1"/>
</dbReference>
<dbReference type="Gene3D" id="1.10.287.310">
    <property type="match status" value="1"/>
</dbReference>
<dbReference type="HAMAP" id="MF_00374">
    <property type="entry name" value="Ribosomal_uL29"/>
    <property type="match status" value="1"/>
</dbReference>
<dbReference type="InterPro" id="IPR050063">
    <property type="entry name" value="Ribosomal_protein_uL29"/>
</dbReference>
<dbReference type="InterPro" id="IPR001854">
    <property type="entry name" value="Ribosomal_uL29"/>
</dbReference>
<dbReference type="InterPro" id="IPR018254">
    <property type="entry name" value="Ribosomal_uL29_CS"/>
</dbReference>
<dbReference type="InterPro" id="IPR036049">
    <property type="entry name" value="Ribosomal_uL29_sf"/>
</dbReference>
<dbReference type="NCBIfam" id="TIGR00012">
    <property type="entry name" value="L29"/>
    <property type="match status" value="1"/>
</dbReference>
<dbReference type="PANTHER" id="PTHR10916">
    <property type="entry name" value="60S RIBOSOMAL PROTEIN L35/50S RIBOSOMAL PROTEIN L29"/>
    <property type="match status" value="1"/>
</dbReference>
<dbReference type="PANTHER" id="PTHR10916:SF0">
    <property type="entry name" value="LARGE RIBOSOMAL SUBUNIT PROTEIN UL29C"/>
    <property type="match status" value="1"/>
</dbReference>
<dbReference type="Pfam" id="PF00831">
    <property type="entry name" value="Ribosomal_L29"/>
    <property type="match status" value="1"/>
</dbReference>
<dbReference type="SUPFAM" id="SSF46561">
    <property type="entry name" value="Ribosomal protein L29 (L29p)"/>
    <property type="match status" value="1"/>
</dbReference>
<dbReference type="PROSITE" id="PS00579">
    <property type="entry name" value="RIBOSOMAL_L29"/>
    <property type="match status" value="1"/>
</dbReference>
<accession>B9JDT6</accession>
<protein>
    <recommendedName>
        <fullName evidence="1">Large ribosomal subunit protein uL29</fullName>
    </recommendedName>
    <alternativeName>
        <fullName evidence="2">50S ribosomal protein L29</fullName>
    </alternativeName>
</protein>
<sequence>MKAADVRALSADQLKDELAKLKKEQFNLRFQKATGQLEKSSRINEVRKDIARVKTIARQKAAEAKA</sequence>
<comment type="similarity">
    <text evidence="1">Belongs to the universal ribosomal protein uL29 family.</text>
</comment>
<proteinExistence type="inferred from homology"/>
<evidence type="ECO:0000255" key="1">
    <source>
        <dbReference type="HAMAP-Rule" id="MF_00374"/>
    </source>
</evidence>
<evidence type="ECO:0000305" key="2"/>
<name>RL29_RHIR8</name>
<reference key="1">
    <citation type="journal article" date="2009" name="J. Bacteriol.">
        <title>Genome sequences of three Agrobacterium biovars help elucidate the evolution of multichromosome genomes in bacteria.</title>
        <authorList>
            <person name="Slater S.C."/>
            <person name="Goldman B.S."/>
            <person name="Goodner B."/>
            <person name="Setubal J.C."/>
            <person name="Farrand S.K."/>
            <person name="Nester E.W."/>
            <person name="Burr T.J."/>
            <person name="Banta L."/>
            <person name="Dickerman A.W."/>
            <person name="Paulsen I."/>
            <person name="Otten L."/>
            <person name="Suen G."/>
            <person name="Welch R."/>
            <person name="Almeida N.F."/>
            <person name="Arnold F."/>
            <person name="Burton O.T."/>
            <person name="Du Z."/>
            <person name="Ewing A."/>
            <person name="Godsy E."/>
            <person name="Heisel S."/>
            <person name="Houmiel K.L."/>
            <person name="Jhaveri J."/>
            <person name="Lu J."/>
            <person name="Miller N.M."/>
            <person name="Norton S."/>
            <person name="Chen Q."/>
            <person name="Phoolcharoen W."/>
            <person name="Ohlin V."/>
            <person name="Ondrusek D."/>
            <person name="Pride N."/>
            <person name="Stricklin S.L."/>
            <person name="Sun J."/>
            <person name="Wheeler C."/>
            <person name="Wilson L."/>
            <person name="Zhu H."/>
            <person name="Wood D.W."/>
        </authorList>
    </citation>
    <scope>NUCLEOTIDE SEQUENCE [LARGE SCALE GENOMIC DNA]</scope>
    <source>
        <strain>K84 / ATCC BAA-868</strain>
    </source>
</reference>
<organism>
    <name type="scientific">Rhizobium rhizogenes (strain K84 / ATCC BAA-868)</name>
    <name type="common">Agrobacterium radiobacter</name>
    <dbReference type="NCBI Taxonomy" id="311403"/>
    <lineage>
        <taxon>Bacteria</taxon>
        <taxon>Pseudomonadati</taxon>
        <taxon>Pseudomonadota</taxon>
        <taxon>Alphaproteobacteria</taxon>
        <taxon>Hyphomicrobiales</taxon>
        <taxon>Rhizobiaceae</taxon>
        <taxon>Rhizobium/Agrobacterium group</taxon>
        <taxon>Rhizobium</taxon>
    </lineage>
</organism>
<feature type="chain" id="PRO_1000193991" description="Large ribosomal subunit protein uL29">
    <location>
        <begin position="1"/>
        <end position="66"/>
    </location>
</feature>
<gene>
    <name evidence="1" type="primary">rpmC</name>
    <name type="ordered locus">Arad_1982</name>
</gene>